<protein>
    <recommendedName>
        <fullName evidence="1">Ribonuclease Y</fullName>
        <shortName evidence="1">RNase Y</shortName>
        <ecNumber evidence="1">3.1.-.-</ecNumber>
    </recommendedName>
</protein>
<feature type="chain" id="PRO_0000344866" description="Ribonuclease Y">
    <location>
        <begin position="1"/>
        <end position="512"/>
    </location>
</feature>
<feature type="transmembrane region" description="Helical" evidence="1">
    <location>
        <begin position="3"/>
        <end position="23"/>
    </location>
</feature>
<feature type="domain" description="KH" evidence="1">
    <location>
        <begin position="202"/>
        <end position="265"/>
    </location>
</feature>
<feature type="domain" description="HD" evidence="2">
    <location>
        <begin position="328"/>
        <end position="421"/>
    </location>
</feature>
<keyword id="KW-1003">Cell membrane</keyword>
<keyword id="KW-0255">Endonuclease</keyword>
<keyword id="KW-0378">Hydrolase</keyword>
<keyword id="KW-0472">Membrane</keyword>
<keyword id="KW-0540">Nuclease</keyword>
<keyword id="KW-1185">Reference proteome</keyword>
<keyword id="KW-0694">RNA-binding</keyword>
<keyword id="KW-0812">Transmembrane</keyword>
<keyword id="KW-1133">Transmembrane helix</keyword>
<comment type="function">
    <text evidence="1">Endoribonuclease that initiates mRNA decay.</text>
</comment>
<comment type="subcellular location">
    <subcellularLocation>
        <location evidence="1">Cell membrane</location>
        <topology evidence="1">Single-pass membrane protein</topology>
    </subcellularLocation>
</comment>
<comment type="similarity">
    <text evidence="1">Belongs to the RNase Y family.</text>
</comment>
<evidence type="ECO:0000255" key="1">
    <source>
        <dbReference type="HAMAP-Rule" id="MF_00335"/>
    </source>
</evidence>
<evidence type="ECO:0000255" key="2">
    <source>
        <dbReference type="PROSITE-ProRule" id="PRU01175"/>
    </source>
</evidence>
<dbReference type="EC" id="3.1.-.-" evidence="1"/>
<dbReference type="EMBL" id="CP000612">
    <property type="protein sequence ID" value="ABO50440.1"/>
    <property type="molecule type" value="Genomic_DNA"/>
</dbReference>
<dbReference type="RefSeq" id="WP_011878251.1">
    <property type="nucleotide sequence ID" value="NC_009253.1"/>
</dbReference>
<dbReference type="SMR" id="A4J5T7"/>
<dbReference type="STRING" id="349161.Dred_1919"/>
<dbReference type="KEGG" id="drm:Dred_1919"/>
<dbReference type="eggNOG" id="COG1418">
    <property type="taxonomic scope" value="Bacteria"/>
</dbReference>
<dbReference type="HOGENOM" id="CLU_028328_1_0_9"/>
<dbReference type="OrthoDB" id="9803205at2"/>
<dbReference type="Proteomes" id="UP000001556">
    <property type="component" value="Chromosome"/>
</dbReference>
<dbReference type="GO" id="GO:0005886">
    <property type="term" value="C:plasma membrane"/>
    <property type="evidence" value="ECO:0007669"/>
    <property type="project" value="UniProtKB-SubCell"/>
</dbReference>
<dbReference type="GO" id="GO:0003723">
    <property type="term" value="F:RNA binding"/>
    <property type="evidence" value="ECO:0007669"/>
    <property type="project" value="UniProtKB-UniRule"/>
</dbReference>
<dbReference type="GO" id="GO:0004521">
    <property type="term" value="F:RNA endonuclease activity"/>
    <property type="evidence" value="ECO:0007669"/>
    <property type="project" value="UniProtKB-UniRule"/>
</dbReference>
<dbReference type="GO" id="GO:0006402">
    <property type="term" value="P:mRNA catabolic process"/>
    <property type="evidence" value="ECO:0007669"/>
    <property type="project" value="UniProtKB-UniRule"/>
</dbReference>
<dbReference type="CDD" id="cd00077">
    <property type="entry name" value="HDc"/>
    <property type="match status" value="1"/>
</dbReference>
<dbReference type="CDD" id="cd22431">
    <property type="entry name" value="KH-I_RNaseY"/>
    <property type="match status" value="1"/>
</dbReference>
<dbReference type="FunFam" id="1.10.3210.10:FF:000003">
    <property type="entry name" value="Ribonuclease Y"/>
    <property type="match status" value="1"/>
</dbReference>
<dbReference type="FunFam" id="3.30.1370.10:FF:000006">
    <property type="entry name" value="Ribonuclease Y"/>
    <property type="match status" value="1"/>
</dbReference>
<dbReference type="Gene3D" id="1.10.3210.10">
    <property type="entry name" value="Hypothetical protein af1432"/>
    <property type="match status" value="1"/>
</dbReference>
<dbReference type="Gene3D" id="3.30.1370.10">
    <property type="entry name" value="K Homology domain, type 1"/>
    <property type="match status" value="1"/>
</dbReference>
<dbReference type="HAMAP" id="MF_00335">
    <property type="entry name" value="RNase_Y"/>
    <property type="match status" value="1"/>
</dbReference>
<dbReference type="InterPro" id="IPR003607">
    <property type="entry name" value="HD/PDEase_dom"/>
</dbReference>
<dbReference type="InterPro" id="IPR006674">
    <property type="entry name" value="HD_domain"/>
</dbReference>
<dbReference type="InterPro" id="IPR006675">
    <property type="entry name" value="HDIG_dom"/>
</dbReference>
<dbReference type="InterPro" id="IPR004087">
    <property type="entry name" value="KH_dom"/>
</dbReference>
<dbReference type="InterPro" id="IPR004088">
    <property type="entry name" value="KH_dom_type_1"/>
</dbReference>
<dbReference type="InterPro" id="IPR036612">
    <property type="entry name" value="KH_dom_type_1_sf"/>
</dbReference>
<dbReference type="InterPro" id="IPR017705">
    <property type="entry name" value="Ribonuclease_Y"/>
</dbReference>
<dbReference type="InterPro" id="IPR022711">
    <property type="entry name" value="RNase_Y_N"/>
</dbReference>
<dbReference type="NCBIfam" id="TIGR00277">
    <property type="entry name" value="HDIG"/>
    <property type="match status" value="1"/>
</dbReference>
<dbReference type="NCBIfam" id="TIGR03319">
    <property type="entry name" value="RNase_Y"/>
    <property type="match status" value="1"/>
</dbReference>
<dbReference type="PANTHER" id="PTHR12826">
    <property type="entry name" value="RIBONUCLEASE Y"/>
    <property type="match status" value="1"/>
</dbReference>
<dbReference type="PANTHER" id="PTHR12826:SF15">
    <property type="entry name" value="RIBONUCLEASE Y"/>
    <property type="match status" value="1"/>
</dbReference>
<dbReference type="Pfam" id="PF01966">
    <property type="entry name" value="HD"/>
    <property type="match status" value="1"/>
</dbReference>
<dbReference type="Pfam" id="PF00013">
    <property type="entry name" value="KH_1"/>
    <property type="match status" value="1"/>
</dbReference>
<dbReference type="Pfam" id="PF12072">
    <property type="entry name" value="RNase_Y_N"/>
    <property type="match status" value="1"/>
</dbReference>
<dbReference type="SMART" id="SM00471">
    <property type="entry name" value="HDc"/>
    <property type="match status" value="1"/>
</dbReference>
<dbReference type="SMART" id="SM00322">
    <property type="entry name" value="KH"/>
    <property type="match status" value="1"/>
</dbReference>
<dbReference type="SUPFAM" id="SSF54791">
    <property type="entry name" value="Eukaryotic type KH-domain (KH-domain type I)"/>
    <property type="match status" value="1"/>
</dbReference>
<dbReference type="SUPFAM" id="SSF109604">
    <property type="entry name" value="HD-domain/PDEase-like"/>
    <property type="match status" value="1"/>
</dbReference>
<dbReference type="PROSITE" id="PS51831">
    <property type="entry name" value="HD"/>
    <property type="match status" value="1"/>
</dbReference>
<dbReference type="PROSITE" id="PS50084">
    <property type="entry name" value="KH_TYPE_1"/>
    <property type="match status" value="1"/>
</dbReference>
<accession>A4J5T7</accession>
<proteinExistence type="inferred from homology"/>
<gene>
    <name evidence="1" type="primary">rny</name>
    <name type="ordered locus">Dred_1919</name>
</gene>
<reference key="1">
    <citation type="submission" date="2007-03" db="EMBL/GenBank/DDBJ databases">
        <title>Complete sequence of Desulfotomaculum reducens MI-1.</title>
        <authorList>
            <consortium name="US DOE Joint Genome Institute"/>
            <person name="Copeland A."/>
            <person name="Lucas S."/>
            <person name="Lapidus A."/>
            <person name="Barry K."/>
            <person name="Detter J.C."/>
            <person name="Glavina del Rio T."/>
            <person name="Hammon N."/>
            <person name="Israni S."/>
            <person name="Dalin E."/>
            <person name="Tice H."/>
            <person name="Pitluck S."/>
            <person name="Sims D."/>
            <person name="Brettin T."/>
            <person name="Bruce D."/>
            <person name="Han C."/>
            <person name="Tapia R."/>
            <person name="Schmutz J."/>
            <person name="Larimer F."/>
            <person name="Land M."/>
            <person name="Hauser L."/>
            <person name="Kyrpides N."/>
            <person name="Kim E."/>
            <person name="Tebo B.M."/>
            <person name="Richardson P."/>
        </authorList>
    </citation>
    <scope>NUCLEOTIDE SEQUENCE [LARGE SCALE GENOMIC DNA]</scope>
    <source>
        <strain>ATCC BAA-1160 / DSM 100696 / MI-1</strain>
    </source>
</reference>
<name>RNY_DESRM</name>
<organism>
    <name type="scientific">Desulforamulus reducens (strain ATCC BAA-1160 / DSM 100696 / MI-1)</name>
    <name type="common">Desulfotomaculum reducens</name>
    <dbReference type="NCBI Taxonomy" id="349161"/>
    <lineage>
        <taxon>Bacteria</taxon>
        <taxon>Bacillati</taxon>
        <taxon>Bacillota</taxon>
        <taxon>Clostridia</taxon>
        <taxon>Eubacteriales</taxon>
        <taxon>Peptococcaceae</taxon>
        <taxon>Desulforamulus</taxon>
    </lineage>
</organism>
<sequence>MEFQIILVVIISALVGLVIGFFIRKNIAEGKITSAEAQAKRILEEAEKNAEGKKREAIVMAKEEVLKLRNEMEREIRDRRNELQRLERRLLQKEETLDRKMDSMEKKEESLSRKEADIENTKAELTNVLNRQLAELERVSGLSSEEARQILLNDVEKELQHDMAVMIKDFENRAKEEADKKARDIISSAIQRCAADHVAEATVAVIPLPNDEMKGRIIGREGRNIRAFETLTGIDLIIDDTPEAVILSGFDPIRREVARLALERLISDGRIHPARIEEMVEKAQKDVEVQIREAGEQATFETGVHGLHPELVKLLGRLKFRTSYGQNVLKHSIEVCHLAGLMAAELGIDVKLAKRAGLLHDIGKAVDHEVEGPHVAIGVNLCQKYKESPEVIHAIAAHHGDEEPRTIEAVLVQAADAISAARPGARRETLESYIKRLQKLEEIAGTFEGVEKSFAIQAGREIRIMVKPDKIDDLAAIRLVRDIAKKIENELDYPGQIKVIIIRETRYVEYAK</sequence>